<keyword id="KW-0150">Chloroplast</keyword>
<keyword id="KW-0240">DNA-directed RNA polymerase</keyword>
<keyword id="KW-0479">Metal-binding</keyword>
<keyword id="KW-0548">Nucleotidyltransferase</keyword>
<keyword id="KW-0934">Plastid</keyword>
<keyword id="KW-0804">Transcription</keyword>
<keyword id="KW-0808">Transferase</keyword>
<keyword id="KW-0862">Zinc</keyword>
<feature type="chain" id="PRO_0000225337" description="DNA-directed RNA polymerase subunit beta''">
    <location>
        <begin position="1"/>
        <end position="3462"/>
    </location>
</feature>
<feature type="region of interest" description="Insert-1">
    <location>
        <begin position="541"/>
        <end position="1085"/>
    </location>
</feature>
<feature type="region of interest" description="Insert-2">
    <location>
        <begin position="1528"/>
        <end position="1585"/>
    </location>
</feature>
<feature type="region of interest" description="Insert-3">
    <location>
        <begin position="1602"/>
        <end position="1699"/>
    </location>
</feature>
<feature type="region of interest" description="Insert-4">
    <location>
        <begin position="1938"/>
        <end position="2168"/>
    </location>
</feature>
<feature type="region of interest" description="Insert-5">
    <location>
        <begin position="2320"/>
        <end position="2870"/>
    </location>
</feature>
<feature type="region of interest" description="Insert-6">
    <location>
        <begin position="2972"/>
        <end position="3196"/>
    </location>
</feature>
<feature type="binding site" evidence="1">
    <location>
        <position position="263"/>
    </location>
    <ligand>
        <name>Zn(2+)</name>
        <dbReference type="ChEBI" id="CHEBI:29105"/>
    </ligand>
</feature>
<feature type="binding site" evidence="1">
    <location>
        <position position="335"/>
    </location>
    <ligand>
        <name>Zn(2+)</name>
        <dbReference type="ChEBI" id="CHEBI:29105"/>
    </ligand>
</feature>
<feature type="binding site" evidence="1">
    <location>
        <position position="342"/>
    </location>
    <ligand>
        <name>Zn(2+)</name>
        <dbReference type="ChEBI" id="CHEBI:29105"/>
    </ligand>
</feature>
<feature type="binding site" evidence="1">
    <location>
        <position position="345"/>
    </location>
    <ligand>
        <name>Zn(2+)</name>
        <dbReference type="ChEBI" id="CHEBI:29105"/>
    </ligand>
</feature>
<name>RPOC2_TUPAK</name>
<comment type="function">
    <text evidence="1">DNA-dependent RNA polymerase catalyzes the transcription of DNA into RNA using the four ribonucleoside triphosphates as substrates.</text>
</comment>
<comment type="catalytic activity">
    <reaction evidence="1">
        <text>RNA(n) + a ribonucleoside 5'-triphosphate = RNA(n+1) + diphosphate</text>
        <dbReference type="Rhea" id="RHEA:21248"/>
        <dbReference type="Rhea" id="RHEA-COMP:14527"/>
        <dbReference type="Rhea" id="RHEA-COMP:17342"/>
        <dbReference type="ChEBI" id="CHEBI:33019"/>
        <dbReference type="ChEBI" id="CHEBI:61557"/>
        <dbReference type="ChEBI" id="CHEBI:140395"/>
        <dbReference type="EC" id="2.7.7.6"/>
    </reaction>
</comment>
<comment type="cofactor">
    <cofactor evidence="1">
        <name>Zn(2+)</name>
        <dbReference type="ChEBI" id="CHEBI:29105"/>
    </cofactor>
    <text evidence="1">Binds 1 Zn(2+) ion per subunit.</text>
</comment>
<comment type="subunit">
    <text evidence="1">In plastids the minimal PEP RNA polymerase catalytic core is composed of four subunits: alpha, beta, beta', and beta''. When a (nuclear-encoded) sigma factor is associated with the core the holoenzyme is formed, which can initiate transcription.</text>
</comment>
<comment type="subcellular location">
    <subcellularLocation>
        <location evidence="1">Plastid</location>
        <location evidence="1">Chloroplast</location>
    </subcellularLocation>
</comment>
<comment type="miscellaneous">
    <text>The coding sequence for this protein is much larger than in other plastids; the extra sequences are spread along the coding region.</text>
</comment>
<comment type="similarity">
    <text evidence="1">Belongs to the RNA polymerase beta' chain family. RpoC2 subfamily.</text>
</comment>
<geneLocation type="chloroplast"/>
<accession>Q3ZJ90</accession>
<dbReference type="EC" id="2.7.7.6" evidence="1"/>
<dbReference type="EMBL" id="AY835431">
    <property type="protein sequence ID" value="AAV80600.1"/>
    <property type="molecule type" value="Genomic_DNA"/>
</dbReference>
<dbReference type="RefSeq" id="YP_636177.1">
    <property type="nucleotide sequence ID" value="NC_008114.1"/>
</dbReference>
<dbReference type="GeneID" id="4108780"/>
<dbReference type="GO" id="GO:0009507">
    <property type="term" value="C:chloroplast"/>
    <property type="evidence" value="ECO:0007669"/>
    <property type="project" value="UniProtKB-SubCell"/>
</dbReference>
<dbReference type="GO" id="GO:0000428">
    <property type="term" value="C:DNA-directed RNA polymerase complex"/>
    <property type="evidence" value="ECO:0007669"/>
    <property type="project" value="UniProtKB-KW"/>
</dbReference>
<dbReference type="GO" id="GO:0005739">
    <property type="term" value="C:mitochondrion"/>
    <property type="evidence" value="ECO:0007669"/>
    <property type="project" value="GOC"/>
</dbReference>
<dbReference type="GO" id="GO:0003677">
    <property type="term" value="F:DNA binding"/>
    <property type="evidence" value="ECO:0007669"/>
    <property type="project" value="UniProtKB-UniRule"/>
</dbReference>
<dbReference type="GO" id="GO:0003899">
    <property type="term" value="F:DNA-directed RNA polymerase activity"/>
    <property type="evidence" value="ECO:0007669"/>
    <property type="project" value="UniProtKB-UniRule"/>
</dbReference>
<dbReference type="GO" id="GO:0008270">
    <property type="term" value="F:zinc ion binding"/>
    <property type="evidence" value="ECO:0007669"/>
    <property type="project" value="UniProtKB-UniRule"/>
</dbReference>
<dbReference type="GO" id="GO:0006351">
    <property type="term" value="P:DNA-templated transcription"/>
    <property type="evidence" value="ECO:0007669"/>
    <property type="project" value="UniProtKB-UniRule"/>
</dbReference>
<dbReference type="CDD" id="cd02655">
    <property type="entry name" value="RNAP_beta'_C"/>
    <property type="match status" value="1"/>
</dbReference>
<dbReference type="Gene3D" id="1.10.132.30">
    <property type="match status" value="1"/>
</dbReference>
<dbReference type="Gene3D" id="1.10.150.390">
    <property type="match status" value="1"/>
</dbReference>
<dbReference type="Gene3D" id="1.10.1790.20">
    <property type="match status" value="1"/>
</dbReference>
<dbReference type="Gene3D" id="1.10.274.100">
    <property type="entry name" value="RNA polymerase Rpb1, domain 3"/>
    <property type="match status" value="1"/>
</dbReference>
<dbReference type="HAMAP" id="MF_01324">
    <property type="entry name" value="RNApol_bact_RpoC2"/>
    <property type="match status" value="1"/>
</dbReference>
<dbReference type="InterPro" id="IPR012756">
    <property type="entry name" value="DNA-dir_RpoC2_beta_pp"/>
</dbReference>
<dbReference type="InterPro" id="IPR045867">
    <property type="entry name" value="DNA-dir_RpoC_beta_prime"/>
</dbReference>
<dbReference type="InterPro" id="IPR042102">
    <property type="entry name" value="RNA_pol_Rpb1_3_sf"/>
</dbReference>
<dbReference type="InterPro" id="IPR007083">
    <property type="entry name" value="RNA_pol_Rpb1_4"/>
</dbReference>
<dbReference type="InterPro" id="IPR007081">
    <property type="entry name" value="RNA_pol_Rpb1_5"/>
</dbReference>
<dbReference type="InterPro" id="IPR038120">
    <property type="entry name" value="Rpb1_funnel_sf"/>
</dbReference>
<dbReference type="NCBIfam" id="TIGR02388">
    <property type="entry name" value="rpoC2_cyan"/>
    <property type="match status" value="1"/>
</dbReference>
<dbReference type="PANTHER" id="PTHR19376">
    <property type="entry name" value="DNA-DIRECTED RNA POLYMERASE"/>
    <property type="match status" value="1"/>
</dbReference>
<dbReference type="PANTHER" id="PTHR19376:SF68">
    <property type="entry name" value="DNA-DIRECTED RNA POLYMERASE SUBUNIT BETA"/>
    <property type="match status" value="1"/>
</dbReference>
<dbReference type="Pfam" id="PF05000">
    <property type="entry name" value="RNA_pol_Rpb1_4"/>
    <property type="match status" value="1"/>
</dbReference>
<dbReference type="Pfam" id="PF04998">
    <property type="entry name" value="RNA_pol_Rpb1_5"/>
    <property type="match status" value="1"/>
</dbReference>
<dbReference type="SUPFAM" id="SSF64484">
    <property type="entry name" value="beta and beta-prime subunits of DNA dependent RNA-polymerase"/>
    <property type="match status" value="1"/>
</dbReference>
<sequence>MFIKKKKKKVSSFEFSSLRSTFSFVHWAKLKHQTSSIIENHSDQISPIQIDFYNRPFEKGRLKALVSWSISYFGEKKTVDLVENLKSIGYAYATKAGISLGIDDLKIPPSKKDYITKAEQILEFTNQDVKKGYLTSIEYFSKVIETWNKTSESLKEEVISNFKKTDELNPVFIMAFSGARGNISQVRQLTSMRGLMSDPQGRIINFPIQSNFREGLTLTEYLISCYGARKGVVDTALRTATSGYLTRRLVDVAHHVIVRGFNCGTKKGLYLSDLKKGDKILLSLKNRIIGRRLAEDIYNSKKQLIATKNQEISSNLSSLITKNKTSIFVRSPLTCQDKNYVCQLCYGWSLANHRLVPSGEAIGIIAAQSIGEPGTQLTMRTFHTGGVFSGEVTDEIKAPFRGIVFFNTSIPGKLIRTTYGQIAFLTKQESFLTLIPENPKQQWLDSSKKLGFSKQKEPDFQKDSLFLQKKVEFKIPAYTLLFVKNNQLVEKNQVLGEASTFLTRQNQSIESYQTIYSEFSGEVKFQHSKGVQVLKKELDFKIDDQELSSVLKNKLRKLKSLFNPSANSSTGEFWILSAQKQTISKPVNLLVKPGDFLHQKALLYLAKKASYSNYFETIALDPSHNLPTLPLPILFYDFGVNSLAKNLNKNAFFNLALLNEQLYLRKGNLFLMQDRSTQKKANRSTIKILPSLQKQTLQNFKKVCSDLPFVSRSLFPISESSRDKLNSIQNGVKLQSTIVGKHRFLSLNIIFTQIAKKKFFKMNLNSEVKIKSLKQFDLNHESNEMKQIGVFNKDKTPTGGFGIQEIFYTSFESKLKTSPLFLLAQFSSDKTLIDLTKQNVQDFKFKNLNYQYFHPFLVLASDPPFCVSEKTLHFMQSCGQSLNEIDPNPKIETFFSKSAPSFLDKNRRNKRFKSLKKTMEKNHLLSLYYFLTQPLSDDNDDTIMNSFNRKSKLNKFSTKRLNKKQIVFGKLNHHFFADKGGDDFHFKNFIHGGLSFKEVCEVDLYLKERVEVFNWKIATLGTPVSDIITKAEKFVLFHSPTNACGSFILEQPLKNPCFYAFGKIGFLRGKTDYGQPNKIFSSNLFNLKKGWKTKTEGRFTNRPNKQKFKSFINSVEKSGPLNKKIFQNEGPFALNDFTKIQPIVGNQLNENFFTNAAELLKKRPGAAKQEFQLTSFLEKFINRHNRLFWFPKDQNILNFADQQSKGPTNLLFQRKFLKDLTLFSDGDPSFSCRSFVFQTKFYLSKKLFENLPRHNFENYDIISGPINFQEFEILQKIPFSFYPLSSRSTQKFGPFFILPREVTKKQSFQIFKYPLLFELKTYSPTFFSTVFFFIRNFGPKFHKKRERKLIKAIFRPLPRLIGFSTLKSPLDSGQTTTEKAGLQKPVYRFIKKSELFFSIFDYQILKNYRRLASNLILKQNGLNLLNYSPILNSLLKSALLFNIASAKKNSVFEKLGLKISAAYSESKTFGIATEKNSLNSNSVVLFQKKQSGFLIRELNPFHNTLGSPFFDRSKKVDNPQSSLTFDRPQSANERKQILKKARQKLRLFPLNLNEKKNRFSSVTLDLLRDQTTLHKMQSCGEAESGNLKTKETLFKKVKRENKKITEIFTFCPFCPQLKSKGKRKSKGDQLFQEPCNLNLGENFLSCLPFGFEYPVKARRRLVKEQRLPFSLSLILPDKLNYYQSLTSFPFSKQMGNRLLKNLTQLNFLNVGCIRLSQLDSKILRSDSFNPQRKELKSKKFNNFSINELSDSFMNLGWTGFSQKNLILKYLDTDQIFKKGGPLKSNLQDSQLVECFFKTKKVHFLFISKLLKESSLNSFFYNFYYSGSSFNSFADIQKFENKASFFQTKKKLYNFEKKDQWQKKMSFLFFIQNKKTHLFLPNSKGFFLKKKKDISCERFSTNVILSKSQSKNETKELKKASLANQNLKKHSTISTENALKNKMNQSFSFSHFNKEKKPLSDCRAQTKGAIQKFSTKLPPTQTGWIFAILNPKIYLNKHNCVEFAGNSNLSDISFDNYVTLTCFLTIRFVNTFFELHANVDFWLKTLNTFHLGLLKQSSFDFKASKIKLQKTPFLFPSFPPNYIELVFVKKAILRRVAKKDSTFCNLYSFENFLLDKRFQKFKTHFNLQSHLKLAPSFCVDLQGSKGLENFAWTGKLRSQSQASWILETNLFSPCFADKQSKSPLLEFENKKCPAFAKGKLQKSKIEKFEFTYNDIKNKLVYFNKSFFLTSDQRPVFQRSFPKKIHRKTLFITHPSIIWKSRFESSLKSLTFFKMKAKQNGTGSLSFFEKKSLETSLNKTSVLFKKVLAIKTFLLFSFSSLNLVSGKLNFLSSVDQNKKSNLKIQSIFENFAYQQSKGSNEINFSRSAALHSMQSFVFSEKLRKTLSLRISNFHKIQKYANQNLESGIGFFSFFQKSLSIVFFDSAYHFSPQNTSTKDSFEIKKENKTVINNYCRFSNFKLLKLPVFKNRFLNKYSLFKSFLNYLSYSFDVKTSKQILVRLPLLKETCFHFNKNSRFKPKLLILNQANSQQLLATCFVQPYSEFSNSSFVFNSKSAHLHSQTAVKHRQNFEKKSKIIFDERKTFSFISSSTQVLFVSKKATHYLNENFRSQNYKKKTYDFIDNANVLKNRFFERLSPVEFHRKREGFLSKDQKQMTFKYQNMQGGLIPALDSTSTFAPFARSSKARGSAKAIFSQAQRLWGEESFINDKQKSIRNQIIFAKNSRFKNLLILNNKNENEKLFYLNLKKKVSEQSTMNFFVPALYKKLFYTKQSISKFLEVKIQPNLQIQWTFFNSNISKHEKQQKFLLPLFDETFNIQGSNLKNGLNFGMLSLSYSTLDPFFECLKKRVNSSWFFNGKQTFKKKKKIAKEGAFFNHSFFLDAKKSKQLNKKIQKKFTKRLQTLNFSEIKKGFFISEKFKTRLSCLIKKPFLISTFFLSYRLKKPKLALNFNYQSLGNNSKKFSLIRLNSIDFNLSKSQRGWFHNQNVSKQFRFFKHNRSVNLFQIHFDFENSCDPCFAMQKQTTSSKPVLFLYNLKPLKTDFFQKGFQTTSQLLFKHINHSIVPLKDDANHLSSFLNQANFRGAFEPKAKTIADKLISQNVAITKPNLPKSNFSSLKGEVFFVTNSRQFKLVDLSVFKKSSREIQLLTNLDLITFRIKNRNFPSKHIEEQKPNLIEKQLAQSKNKLQIYIGQLLRYGKEISPGIGLNQSGQILILQSNKLVLRYAKPFLLASGGICDLVQGDFVKNQSPLLNLKYKSLKTEDIVQGIPKIEQLFEARENFQDELGINNLLKNKFLVYKTLYHPKEAVRKSFEFIQHYIIDGIQYVYQSQGVNISDKHIEIIVKQMTSKVRILEPRNSGLLRGDVVDLDWIERINLDILTGKKAQYEPIVLGITKASLDRRGFISAASFQETIKVLTKATILQRRDYLRGLKENVILGHLINSGTGSTLYSILKEKKSNFLNRFLQ</sequence>
<evidence type="ECO:0000255" key="1">
    <source>
        <dbReference type="HAMAP-Rule" id="MF_01324"/>
    </source>
</evidence>
<protein>
    <recommendedName>
        <fullName evidence="1">DNA-directed RNA polymerase subunit beta''</fullName>
        <ecNumber evidence="1">2.7.7.6</ecNumber>
    </recommendedName>
    <alternativeName>
        <fullName evidence="1">PEP</fullName>
    </alternativeName>
    <alternativeName>
        <fullName evidence="1">Plastid-encoded RNA polymerase subunit beta''</fullName>
        <shortName evidence="1">RNA polymerase subunit beta''</shortName>
    </alternativeName>
</protein>
<proteinExistence type="inferred from homology"/>
<organism>
    <name type="scientific">Tupiella akineta</name>
    <name type="common">Green alga</name>
    <name type="synonym">Pseudendoclonium akinetum</name>
    <dbReference type="NCBI Taxonomy" id="160070"/>
    <lineage>
        <taxon>Eukaryota</taxon>
        <taxon>Viridiplantae</taxon>
        <taxon>Chlorophyta</taxon>
        <taxon>Ulvophyceae</taxon>
        <taxon>OUU clade</taxon>
        <taxon>Ulotrichales</taxon>
        <taxon>Tupiellaceae</taxon>
        <taxon>Tupiella</taxon>
    </lineage>
</organism>
<reference key="1">
    <citation type="journal article" date="2005" name="Mol. Biol. Evol.">
        <title>The chloroplast genome sequence of the green alga Pseudendoclonium akinetum (Ulvophyceae) reveals unusual structural features and new insights into the branching order of chlorophyte lineages.</title>
        <authorList>
            <person name="Pombert J.-F."/>
            <person name="Otis C."/>
            <person name="Lemieux C."/>
            <person name="Turmel M."/>
        </authorList>
    </citation>
    <scope>NUCLEOTIDE SEQUENCE [LARGE SCALE GENOMIC DNA]</scope>
    <source>
        <strain>UTEX 1912</strain>
    </source>
</reference>
<gene>
    <name evidence="1" type="primary">rpoC2</name>
</gene>